<keyword id="KW-0025">Alternative splicing</keyword>
<keyword id="KW-1003">Cell membrane</keyword>
<keyword id="KW-1015">Disulfide bond</keyword>
<keyword id="KW-0256">Endoplasmic reticulum</keyword>
<keyword id="KW-0325">Glycoprotein</keyword>
<keyword id="KW-0472">Membrane</keyword>
<keyword id="KW-1267">Proteomics identification</keyword>
<keyword id="KW-1185">Reference proteome</keyword>
<keyword id="KW-0677">Repeat</keyword>
<keyword id="KW-0732">Signal</keyword>
<keyword id="KW-0768">Sushi</keyword>
<keyword id="KW-0812">Transmembrane</keyword>
<keyword id="KW-1133">Transmembrane helix</keyword>
<reference key="1">
    <citation type="submission" date="1999-10" db="EMBL/GenBank/DDBJ databases">
        <title>Identification of novel seizure-related proteins from the human brain.</title>
        <authorList>
            <person name="Schrotz-King P."/>
            <person name="King A."/>
            <person name="Nyborg Nielsen P."/>
            <person name="Andersen J."/>
            <person name="Kuster B."/>
            <person name="Mann M."/>
        </authorList>
    </citation>
    <scope>NUCLEOTIDE SEQUENCE [MRNA] (ISOFORMS 2; 3 AND 4)</scope>
</reference>
<reference key="2">
    <citation type="journal article" date="2003" name="Genome Res.">
        <title>The secreted protein discovery initiative (SPDI), a large-scale effort to identify novel human secreted and transmembrane proteins: a bioinformatics assessment.</title>
        <authorList>
            <person name="Clark H.F."/>
            <person name="Gurney A.L."/>
            <person name="Abaya E."/>
            <person name="Baker K."/>
            <person name="Baldwin D.T."/>
            <person name="Brush J."/>
            <person name="Chen J."/>
            <person name="Chow B."/>
            <person name="Chui C."/>
            <person name="Crowley C."/>
            <person name="Currell B."/>
            <person name="Deuel B."/>
            <person name="Dowd P."/>
            <person name="Eaton D."/>
            <person name="Foster J.S."/>
            <person name="Grimaldi C."/>
            <person name="Gu Q."/>
            <person name="Hass P.E."/>
            <person name="Heldens S."/>
            <person name="Huang A."/>
            <person name="Kim H.S."/>
            <person name="Klimowski L."/>
            <person name="Jin Y."/>
            <person name="Johnson S."/>
            <person name="Lee J."/>
            <person name="Lewis L."/>
            <person name="Liao D."/>
            <person name="Mark M.R."/>
            <person name="Robbie E."/>
            <person name="Sanchez C."/>
            <person name="Schoenfeld J."/>
            <person name="Seshagiri S."/>
            <person name="Simmons L."/>
            <person name="Singh J."/>
            <person name="Smith V."/>
            <person name="Stinson J."/>
            <person name="Vagts A."/>
            <person name="Vandlen R.L."/>
            <person name="Watanabe C."/>
            <person name="Wieand D."/>
            <person name="Woods K."/>
            <person name="Xie M.-H."/>
            <person name="Yansura D.G."/>
            <person name="Yi S."/>
            <person name="Yu G."/>
            <person name="Yuan J."/>
            <person name="Zhang M."/>
            <person name="Zhang Z."/>
            <person name="Goddard A.D."/>
            <person name="Wood W.I."/>
            <person name="Godowski P.J."/>
            <person name="Gray A.M."/>
        </authorList>
    </citation>
    <scope>NUCLEOTIDE SEQUENCE [LARGE SCALE MRNA] (ISOFORM 1)</scope>
    <scope>VARIANT PRO-74</scope>
</reference>
<reference key="3">
    <citation type="journal article" date="2004" name="Nat. Genet.">
        <title>Complete sequencing and characterization of 21,243 full-length human cDNAs.</title>
        <authorList>
            <person name="Ota T."/>
            <person name="Suzuki Y."/>
            <person name="Nishikawa T."/>
            <person name="Otsuki T."/>
            <person name="Sugiyama T."/>
            <person name="Irie R."/>
            <person name="Wakamatsu A."/>
            <person name="Hayashi K."/>
            <person name="Sato H."/>
            <person name="Nagai K."/>
            <person name="Kimura K."/>
            <person name="Makita H."/>
            <person name="Sekine M."/>
            <person name="Obayashi M."/>
            <person name="Nishi T."/>
            <person name="Shibahara T."/>
            <person name="Tanaka T."/>
            <person name="Ishii S."/>
            <person name="Yamamoto J."/>
            <person name="Saito K."/>
            <person name="Kawai Y."/>
            <person name="Isono Y."/>
            <person name="Nakamura Y."/>
            <person name="Nagahari K."/>
            <person name="Murakami K."/>
            <person name="Yasuda T."/>
            <person name="Iwayanagi T."/>
            <person name="Wagatsuma M."/>
            <person name="Shiratori A."/>
            <person name="Sudo H."/>
            <person name="Hosoiri T."/>
            <person name="Kaku Y."/>
            <person name="Kodaira H."/>
            <person name="Kondo H."/>
            <person name="Sugawara M."/>
            <person name="Takahashi M."/>
            <person name="Kanda K."/>
            <person name="Yokoi T."/>
            <person name="Furuya T."/>
            <person name="Kikkawa E."/>
            <person name="Omura Y."/>
            <person name="Abe K."/>
            <person name="Kamihara K."/>
            <person name="Katsuta N."/>
            <person name="Sato K."/>
            <person name="Tanikawa M."/>
            <person name="Yamazaki M."/>
            <person name="Ninomiya K."/>
            <person name="Ishibashi T."/>
            <person name="Yamashita H."/>
            <person name="Murakawa K."/>
            <person name="Fujimori K."/>
            <person name="Tanai H."/>
            <person name="Kimata M."/>
            <person name="Watanabe M."/>
            <person name="Hiraoka S."/>
            <person name="Chiba Y."/>
            <person name="Ishida S."/>
            <person name="Ono Y."/>
            <person name="Takiguchi S."/>
            <person name="Watanabe S."/>
            <person name="Yosida M."/>
            <person name="Hotuta T."/>
            <person name="Kusano J."/>
            <person name="Kanehori K."/>
            <person name="Takahashi-Fujii A."/>
            <person name="Hara H."/>
            <person name="Tanase T.-O."/>
            <person name="Nomura Y."/>
            <person name="Togiya S."/>
            <person name="Komai F."/>
            <person name="Hara R."/>
            <person name="Takeuchi K."/>
            <person name="Arita M."/>
            <person name="Imose N."/>
            <person name="Musashino K."/>
            <person name="Yuuki H."/>
            <person name="Oshima A."/>
            <person name="Sasaki N."/>
            <person name="Aotsuka S."/>
            <person name="Yoshikawa Y."/>
            <person name="Matsunawa H."/>
            <person name="Ichihara T."/>
            <person name="Shiohata N."/>
            <person name="Sano S."/>
            <person name="Moriya S."/>
            <person name="Momiyama H."/>
            <person name="Satoh N."/>
            <person name="Takami S."/>
            <person name="Terashima Y."/>
            <person name="Suzuki O."/>
            <person name="Nakagawa S."/>
            <person name="Senoh A."/>
            <person name="Mizoguchi H."/>
            <person name="Goto Y."/>
            <person name="Shimizu F."/>
            <person name="Wakebe H."/>
            <person name="Hishigaki H."/>
            <person name="Watanabe T."/>
            <person name="Sugiyama A."/>
            <person name="Takemoto M."/>
            <person name="Kawakami B."/>
            <person name="Yamazaki M."/>
            <person name="Watanabe K."/>
            <person name="Kumagai A."/>
            <person name="Itakura S."/>
            <person name="Fukuzumi Y."/>
            <person name="Fujimori Y."/>
            <person name="Komiyama M."/>
            <person name="Tashiro H."/>
            <person name="Tanigami A."/>
            <person name="Fujiwara T."/>
            <person name="Ono T."/>
            <person name="Yamada K."/>
            <person name="Fujii Y."/>
            <person name="Ozaki K."/>
            <person name="Hirao M."/>
            <person name="Ohmori Y."/>
            <person name="Kawabata A."/>
            <person name="Hikiji T."/>
            <person name="Kobatake N."/>
            <person name="Inagaki H."/>
            <person name="Ikema Y."/>
            <person name="Okamoto S."/>
            <person name="Okitani R."/>
            <person name="Kawakami T."/>
            <person name="Noguchi S."/>
            <person name="Itoh T."/>
            <person name="Shigeta K."/>
            <person name="Senba T."/>
            <person name="Matsumura K."/>
            <person name="Nakajima Y."/>
            <person name="Mizuno T."/>
            <person name="Morinaga M."/>
            <person name="Sasaki M."/>
            <person name="Togashi T."/>
            <person name="Oyama M."/>
            <person name="Hata H."/>
            <person name="Watanabe M."/>
            <person name="Komatsu T."/>
            <person name="Mizushima-Sugano J."/>
            <person name="Satoh T."/>
            <person name="Shirai Y."/>
            <person name="Takahashi Y."/>
            <person name="Nakagawa K."/>
            <person name="Okumura K."/>
            <person name="Nagase T."/>
            <person name="Nomura N."/>
            <person name="Kikuchi H."/>
            <person name="Masuho Y."/>
            <person name="Yamashita R."/>
            <person name="Nakai K."/>
            <person name="Yada T."/>
            <person name="Nakamura Y."/>
            <person name="Ohara O."/>
            <person name="Isogai T."/>
            <person name="Sugano S."/>
        </authorList>
    </citation>
    <scope>NUCLEOTIDE SEQUENCE [LARGE SCALE MRNA] (ISOFORM 5)</scope>
    <scope>VARIANT PRO-74</scope>
    <source>
        <tissue>Cerebellum</tissue>
    </source>
</reference>
<reference key="4">
    <citation type="journal article" date="2004" name="Nature">
        <title>The sequence and analysis of duplication-rich human chromosome 16.</title>
        <authorList>
            <person name="Martin J."/>
            <person name="Han C."/>
            <person name="Gordon L.A."/>
            <person name="Terry A."/>
            <person name="Prabhakar S."/>
            <person name="She X."/>
            <person name="Xie G."/>
            <person name="Hellsten U."/>
            <person name="Chan Y.M."/>
            <person name="Altherr M."/>
            <person name="Couronne O."/>
            <person name="Aerts A."/>
            <person name="Bajorek E."/>
            <person name="Black S."/>
            <person name="Blumer H."/>
            <person name="Branscomb E."/>
            <person name="Brown N.C."/>
            <person name="Bruno W.J."/>
            <person name="Buckingham J.M."/>
            <person name="Callen D.F."/>
            <person name="Campbell C.S."/>
            <person name="Campbell M.L."/>
            <person name="Campbell E.W."/>
            <person name="Caoile C."/>
            <person name="Challacombe J.F."/>
            <person name="Chasteen L.A."/>
            <person name="Chertkov O."/>
            <person name="Chi H.C."/>
            <person name="Christensen M."/>
            <person name="Clark L.M."/>
            <person name="Cohn J.D."/>
            <person name="Denys M."/>
            <person name="Detter J.C."/>
            <person name="Dickson M."/>
            <person name="Dimitrijevic-Bussod M."/>
            <person name="Escobar J."/>
            <person name="Fawcett J.J."/>
            <person name="Flowers D."/>
            <person name="Fotopulos D."/>
            <person name="Glavina T."/>
            <person name="Gomez M."/>
            <person name="Gonzales E."/>
            <person name="Goodstein D."/>
            <person name="Goodwin L.A."/>
            <person name="Grady D.L."/>
            <person name="Grigoriev I."/>
            <person name="Groza M."/>
            <person name="Hammon N."/>
            <person name="Hawkins T."/>
            <person name="Haydu L."/>
            <person name="Hildebrand C.E."/>
            <person name="Huang W."/>
            <person name="Israni S."/>
            <person name="Jett J."/>
            <person name="Jewett P.B."/>
            <person name="Kadner K."/>
            <person name="Kimball H."/>
            <person name="Kobayashi A."/>
            <person name="Krawczyk M.-C."/>
            <person name="Leyba T."/>
            <person name="Longmire J.L."/>
            <person name="Lopez F."/>
            <person name="Lou Y."/>
            <person name="Lowry S."/>
            <person name="Ludeman T."/>
            <person name="Manohar C.F."/>
            <person name="Mark G.A."/>
            <person name="McMurray K.L."/>
            <person name="Meincke L.J."/>
            <person name="Morgan J."/>
            <person name="Moyzis R.K."/>
            <person name="Mundt M.O."/>
            <person name="Munk A.C."/>
            <person name="Nandkeshwar R.D."/>
            <person name="Pitluck S."/>
            <person name="Pollard M."/>
            <person name="Predki P."/>
            <person name="Parson-Quintana B."/>
            <person name="Ramirez L."/>
            <person name="Rash S."/>
            <person name="Retterer J."/>
            <person name="Ricke D.O."/>
            <person name="Robinson D.L."/>
            <person name="Rodriguez A."/>
            <person name="Salamov A."/>
            <person name="Saunders E.H."/>
            <person name="Scott D."/>
            <person name="Shough T."/>
            <person name="Stallings R.L."/>
            <person name="Stalvey M."/>
            <person name="Sutherland R.D."/>
            <person name="Tapia R."/>
            <person name="Tesmer J.G."/>
            <person name="Thayer N."/>
            <person name="Thompson L.S."/>
            <person name="Tice H."/>
            <person name="Torney D.C."/>
            <person name="Tran-Gyamfi M."/>
            <person name="Tsai M."/>
            <person name="Ulanovsky L.E."/>
            <person name="Ustaszewska A."/>
            <person name="Vo N."/>
            <person name="White P.S."/>
            <person name="Williams A.L."/>
            <person name="Wills P.L."/>
            <person name="Wu J.-R."/>
            <person name="Wu K."/>
            <person name="Yang J."/>
            <person name="DeJong P."/>
            <person name="Bruce D."/>
            <person name="Doggett N.A."/>
            <person name="Deaven L."/>
            <person name="Schmutz J."/>
            <person name="Grimwood J."/>
            <person name="Richardson P."/>
            <person name="Rokhsar D.S."/>
            <person name="Eichler E.E."/>
            <person name="Gilna P."/>
            <person name="Lucas S.M."/>
            <person name="Myers R.M."/>
            <person name="Rubin E.M."/>
            <person name="Pennacchio L.A."/>
        </authorList>
    </citation>
    <scope>NUCLEOTIDE SEQUENCE [LARGE SCALE GENOMIC DNA]</scope>
</reference>
<reference key="5">
    <citation type="journal article" date="2004" name="Genome Res.">
        <title>The status, quality, and expansion of the NIH full-length cDNA project: the Mammalian Gene Collection (MGC).</title>
        <authorList>
            <consortium name="The MGC Project Team"/>
        </authorList>
    </citation>
    <scope>NUCLEOTIDE SEQUENCE [LARGE SCALE MRNA] (ISOFORM 6)</scope>
    <scope>VARIANT PRO-74</scope>
    <source>
        <tissue>Brain</tissue>
    </source>
</reference>
<reference key="6">
    <citation type="journal article" date="2006" name="Cancer Sci.">
        <title>Characterization of SEZ6L2 cell-surface protein as a novel prognostic marker for lung cancer.</title>
        <authorList>
            <person name="Ishikawa N."/>
            <person name="Daigo Y."/>
            <person name="Takano A."/>
            <person name="Taniwaki M."/>
            <person name="Kato T."/>
            <person name="Tanaka S."/>
            <person name="Yasui W."/>
            <person name="Takeshima Y."/>
            <person name="Inai K."/>
            <person name="Nishimura H."/>
            <person name="Tsuchiya E."/>
            <person name="Kohno N."/>
            <person name="Nakamura Y."/>
        </authorList>
    </citation>
    <scope>INDUCTION</scope>
    <scope>SUBCELLULAR LOCATION</scope>
</reference>
<reference key="7">
    <citation type="journal article" date="2009" name="Nat. Methods">
        <title>Enrichment of glycopeptides for glycan structure and attachment site identification.</title>
        <authorList>
            <person name="Nilsson J."/>
            <person name="Rueetschi U."/>
            <person name="Halim A."/>
            <person name="Hesse C."/>
            <person name="Carlsohn E."/>
            <person name="Brinkmalm G."/>
            <person name="Larson G."/>
        </authorList>
    </citation>
    <scope>GLYCOSYLATION [LARGE SCALE ANALYSIS]</scope>
    <scope>SIGNAL SEQUENCE CLEAVAGE SITE</scope>
    <scope>STRUCTURE OF CARBOHYDRATES</scope>
    <source>
        <tissue>Cerebrospinal fluid</tissue>
    </source>
</reference>
<feature type="signal peptide" evidence="10">
    <location>
        <begin position="1"/>
        <end position="27"/>
    </location>
</feature>
<feature type="chain" id="PRO_0000333888" description="Seizure 6-like protein 2">
    <location>
        <begin position="28"/>
        <end position="910"/>
    </location>
</feature>
<feature type="topological domain" description="Extracellular" evidence="2">
    <location>
        <begin position="28"/>
        <end position="844"/>
    </location>
</feature>
<feature type="transmembrane region" description="Helical" evidence="2">
    <location>
        <begin position="845"/>
        <end position="865"/>
    </location>
</feature>
<feature type="topological domain" description="Cytoplasmic" evidence="2">
    <location>
        <begin position="866"/>
        <end position="910"/>
    </location>
</feature>
<feature type="domain" description="CUB 1" evidence="3">
    <location>
        <begin position="173"/>
        <end position="286"/>
    </location>
</feature>
<feature type="domain" description="Sushi 1" evidence="4">
    <location>
        <begin position="288"/>
        <end position="347"/>
    </location>
</feature>
<feature type="domain" description="CUB 2" evidence="3">
    <location>
        <begin position="349"/>
        <end position="459"/>
    </location>
</feature>
<feature type="domain" description="Sushi 2" evidence="4">
    <location>
        <begin position="462"/>
        <end position="525"/>
    </location>
</feature>
<feature type="domain" description="CUB 3" evidence="3">
    <location>
        <begin position="527"/>
        <end position="638"/>
    </location>
</feature>
<feature type="domain" description="Sushi 3" evidence="4">
    <location>
        <begin position="642"/>
        <end position="701"/>
    </location>
</feature>
<feature type="domain" description="Sushi 4" evidence="4">
    <location>
        <begin position="703"/>
        <end position="766"/>
    </location>
</feature>
<feature type="domain" description="Sushi 5" evidence="4">
    <location>
        <begin position="769"/>
        <end position="830"/>
    </location>
</feature>
<feature type="region of interest" description="O-glycosylated at one site">
    <location>
        <begin position="41"/>
        <end position="48"/>
    </location>
</feature>
<feature type="region of interest" description="Disordered" evidence="5">
    <location>
        <begin position="65"/>
        <end position="152"/>
    </location>
</feature>
<feature type="compositionally biased region" description="Pro residues" evidence="5">
    <location>
        <begin position="123"/>
        <end position="145"/>
    </location>
</feature>
<feature type="glycosylation site" description="N-linked (GlcNAc...) asparagine" evidence="2">
    <location>
        <position position="176"/>
    </location>
</feature>
<feature type="glycosylation site" description="N-linked (GlcNAc...) asparagine" evidence="2">
    <location>
        <position position="222"/>
    </location>
</feature>
<feature type="glycosylation site" description="N-linked (GlcNAc...) asparagine" evidence="2">
    <location>
        <position position="247"/>
    </location>
</feature>
<feature type="glycosylation site" description="N-linked (GlcNAc...) asparagine" evidence="2">
    <location>
        <position position="332"/>
    </location>
</feature>
<feature type="glycosylation site" description="N-linked (GlcNAc...) asparagine" evidence="2">
    <location>
        <position position="355"/>
    </location>
</feature>
<feature type="glycosylation site" description="N-linked (GlcNAc...) asparagine" evidence="2">
    <location>
        <position position="373"/>
    </location>
</feature>
<feature type="glycosylation site" description="N-linked (GlcNAc...) asparagine" evidence="2">
    <location>
        <position position="473"/>
    </location>
</feature>
<feature type="glycosylation site" description="N-linked (GlcNAc...) asparagine" evidence="2">
    <location>
        <position position="517"/>
    </location>
</feature>
<feature type="glycosylation site" description="N-linked (GlcNAc...) asparagine" evidence="2">
    <location>
        <position position="641"/>
    </location>
</feature>
<feature type="disulfide bond" evidence="1">
    <location>
        <begin position="173"/>
        <end position="202"/>
    </location>
</feature>
<feature type="disulfide bond" evidence="1">
    <location>
        <begin position="290"/>
        <end position="330"/>
    </location>
</feature>
<feature type="disulfide bond" evidence="1">
    <location>
        <begin position="316"/>
        <end position="345"/>
    </location>
</feature>
<feature type="disulfide bond" evidence="1">
    <location>
        <begin position="349"/>
        <end position="376"/>
    </location>
</feature>
<feature type="disulfide bond" evidence="1">
    <location>
        <begin position="464"/>
        <end position="508"/>
    </location>
</feature>
<feature type="disulfide bond" evidence="1">
    <location>
        <begin position="491"/>
        <end position="523"/>
    </location>
</feature>
<feature type="disulfide bond" evidence="1">
    <location>
        <begin position="527"/>
        <end position="553"/>
    </location>
</feature>
<feature type="disulfide bond" evidence="1">
    <location>
        <begin position="644"/>
        <end position="686"/>
    </location>
</feature>
<feature type="disulfide bond" evidence="1">
    <location>
        <begin position="672"/>
        <end position="699"/>
    </location>
</feature>
<feature type="disulfide bond" evidence="1">
    <location>
        <begin position="705"/>
        <end position="747"/>
    </location>
</feature>
<feature type="disulfide bond" evidence="1">
    <location>
        <begin position="733"/>
        <end position="764"/>
    </location>
</feature>
<feature type="disulfide bond" evidence="1">
    <location>
        <begin position="771"/>
        <end position="813"/>
    </location>
</feature>
<feature type="disulfide bond" evidence="1">
    <location>
        <begin position="799"/>
        <end position="828"/>
    </location>
</feature>
<feature type="splice variant" id="VSP_044739" description="In isoform 5." evidence="11">
    <location>
        <begin position="27"/>
        <end position="70"/>
    </location>
</feature>
<feature type="splice variant" id="VSP_033595" description="In isoform 2, isoform 3 and isoform 4." evidence="13">
    <location>
        <begin position="72"/>
        <end position="141"/>
    </location>
</feature>
<feature type="splice variant" id="VSP_045702" description="In isoform 6." evidence="12">
    <location>
        <begin position="171"/>
        <end position="284"/>
    </location>
</feature>
<feature type="splice variant" id="VSP_033597" description="In isoform 4." evidence="13">
    <location>
        <begin position="651"/>
        <end position="910"/>
    </location>
</feature>
<feature type="splice variant" id="VSP_045703" description="In isoform 6." evidence="12">
    <original>K</original>
    <variation>KVAYEELLDNRKLE</variation>
    <location>
        <position position="829"/>
    </location>
</feature>
<feature type="splice variant" id="VSP_033596" description="In isoform 3 and isoform 5." evidence="11 13">
    <original>V</original>
    <variation>VAYEELLDNRKLEV</variation>
    <location>
        <position position="830"/>
    </location>
</feature>
<feature type="sequence variant" id="VAR_065205" description="In dbSNP:rs11649499." evidence="6 7 8">
    <original>R</original>
    <variation>P</variation>
    <location>
        <position position="74"/>
    </location>
</feature>
<feature type="sequence conflict" description="In Ref. 3; BAH11566." evidence="14" ref="3">
    <original>E</original>
    <variation>G</variation>
    <location>
        <position position="228"/>
    </location>
</feature>
<feature type="sequence conflict" description="In Ref. 3; BAH11566." evidence="14" ref="3">
    <original>D</original>
    <variation>G</variation>
    <location>
        <position position="398"/>
    </location>
</feature>
<feature type="sequence conflict" description="In Ref. 3; BAH11566." evidence="14" ref="3">
    <original>G</original>
    <variation>R</variation>
    <location>
        <position position="494"/>
    </location>
</feature>
<organism>
    <name type="scientific">Homo sapiens</name>
    <name type="common">Human</name>
    <dbReference type="NCBI Taxonomy" id="9606"/>
    <lineage>
        <taxon>Eukaryota</taxon>
        <taxon>Metazoa</taxon>
        <taxon>Chordata</taxon>
        <taxon>Craniata</taxon>
        <taxon>Vertebrata</taxon>
        <taxon>Euteleostomi</taxon>
        <taxon>Mammalia</taxon>
        <taxon>Eutheria</taxon>
        <taxon>Euarchontoglires</taxon>
        <taxon>Primates</taxon>
        <taxon>Haplorrhini</taxon>
        <taxon>Catarrhini</taxon>
        <taxon>Hominidae</taxon>
        <taxon>Homo</taxon>
    </lineage>
</organism>
<dbReference type="EMBL" id="AJ245820">
    <property type="protein sequence ID" value="CAB57950.1"/>
    <property type="molecule type" value="mRNA"/>
</dbReference>
<dbReference type="EMBL" id="AJ245821">
    <property type="protein sequence ID" value="CAB57951.1"/>
    <property type="molecule type" value="mRNA"/>
</dbReference>
<dbReference type="EMBL" id="AJ245822">
    <property type="protein sequence ID" value="CAB57952.1"/>
    <property type="molecule type" value="mRNA"/>
</dbReference>
<dbReference type="EMBL" id="AY358404">
    <property type="protein sequence ID" value="AAQ88770.1"/>
    <property type="molecule type" value="mRNA"/>
</dbReference>
<dbReference type="EMBL" id="AK293675">
    <property type="protein sequence ID" value="BAH11566.1"/>
    <property type="molecule type" value="mRNA"/>
</dbReference>
<dbReference type="EMBL" id="AC120114">
    <property type="status" value="NOT_ANNOTATED_CDS"/>
    <property type="molecule type" value="Genomic_DNA"/>
</dbReference>
<dbReference type="EMBL" id="BC000567">
    <property type="protein sequence ID" value="AAH00567.1"/>
    <property type="molecule type" value="mRNA"/>
</dbReference>
<dbReference type="CCDS" id="CCDS10658.1">
    <molecule id="Q6UXD5-3"/>
</dbReference>
<dbReference type="CCDS" id="CCDS10659.1">
    <molecule id="Q6UXD5-1"/>
</dbReference>
<dbReference type="CCDS" id="CCDS45458.1">
    <molecule id="Q6UXD5-6"/>
</dbReference>
<dbReference type="CCDS" id="CCDS58447.1">
    <molecule id="Q6UXD5-5"/>
</dbReference>
<dbReference type="RefSeq" id="NP_001107571.1">
    <molecule id="Q6UXD5-2"/>
    <property type="nucleotide sequence ID" value="NM_001114099.3"/>
</dbReference>
<dbReference type="RefSeq" id="NP_001107572.1">
    <molecule id="Q6UXD5-6"/>
    <property type="nucleotide sequence ID" value="NM_001114100.3"/>
</dbReference>
<dbReference type="RefSeq" id="NP_001230261.1">
    <property type="nucleotide sequence ID" value="NM_001243332.1"/>
</dbReference>
<dbReference type="RefSeq" id="NP_001230262.1">
    <molecule id="Q6UXD5-5"/>
    <property type="nucleotide sequence ID" value="NM_001243333.2"/>
</dbReference>
<dbReference type="RefSeq" id="NP_036542.1">
    <molecule id="Q6UXD5-3"/>
    <property type="nucleotide sequence ID" value="NM_012410.4"/>
</dbReference>
<dbReference type="RefSeq" id="NP_963869.2">
    <molecule id="Q6UXD5-1"/>
    <property type="nucleotide sequence ID" value="NM_201575.4"/>
</dbReference>
<dbReference type="SMR" id="Q6UXD5"/>
<dbReference type="BioGRID" id="117694">
    <property type="interactions" value="50"/>
</dbReference>
<dbReference type="FunCoup" id="Q6UXD5">
    <property type="interactions" value="256"/>
</dbReference>
<dbReference type="IntAct" id="Q6UXD5">
    <property type="interactions" value="35"/>
</dbReference>
<dbReference type="STRING" id="9606.ENSP00000481917"/>
<dbReference type="GlyConnect" id="1974">
    <property type="glycosylation" value="11 N-Linked glycans (2 sites)"/>
</dbReference>
<dbReference type="GlyCosmos" id="Q6UXD5">
    <property type="glycosylation" value="14 sites, 14 glycans"/>
</dbReference>
<dbReference type="GlyGen" id="Q6UXD5">
    <property type="glycosylation" value="27 sites, 18 N-linked glycans (5 sites), 4 O-linked glycans (17 sites)"/>
</dbReference>
<dbReference type="iPTMnet" id="Q6UXD5"/>
<dbReference type="PhosphoSitePlus" id="Q6UXD5"/>
<dbReference type="SwissPalm" id="Q6UXD5"/>
<dbReference type="BioMuta" id="SEZ6L2"/>
<dbReference type="DMDM" id="334302856"/>
<dbReference type="CPTAC" id="CPTAC-1515"/>
<dbReference type="jPOST" id="Q6UXD5"/>
<dbReference type="MassIVE" id="Q6UXD5"/>
<dbReference type="PaxDb" id="9606-ENSP00000481917"/>
<dbReference type="PeptideAtlas" id="Q6UXD5"/>
<dbReference type="ProteomicsDB" id="25901"/>
<dbReference type="ProteomicsDB" id="43361"/>
<dbReference type="ProteomicsDB" id="67592">
    <molecule id="Q6UXD5-1"/>
</dbReference>
<dbReference type="ProteomicsDB" id="67593">
    <molecule id="Q6UXD5-2"/>
</dbReference>
<dbReference type="ProteomicsDB" id="67594">
    <molecule id="Q6UXD5-3"/>
</dbReference>
<dbReference type="ProteomicsDB" id="67595">
    <molecule id="Q6UXD5-4"/>
</dbReference>
<dbReference type="Pumba" id="Q6UXD5"/>
<dbReference type="Antibodypedia" id="54161">
    <property type="antibodies" value="80 antibodies from 16 providers"/>
</dbReference>
<dbReference type="DNASU" id="26470"/>
<dbReference type="Ensembl" id="ENST00000308713.9">
    <molecule id="Q6UXD5-1"/>
    <property type="protein sequence ID" value="ENSP00000312550.5"/>
    <property type="gene ID" value="ENSG00000174938.15"/>
</dbReference>
<dbReference type="Ensembl" id="ENST00000346932.9">
    <molecule id="Q6UXD5-6"/>
    <property type="protein sequence ID" value="ENSP00000319215.6"/>
    <property type="gene ID" value="ENSG00000174938.15"/>
</dbReference>
<dbReference type="Ensembl" id="ENST00000350527.7">
    <molecule id="Q6UXD5-3"/>
    <property type="protein sequence ID" value="ENSP00000310206.3"/>
    <property type="gene ID" value="ENSG00000174938.15"/>
</dbReference>
<dbReference type="Ensembl" id="ENST00000537485.5">
    <molecule id="Q6UXD5-5"/>
    <property type="protein sequence ID" value="ENSP00000439412.1"/>
    <property type="gene ID" value="ENSG00000174938.15"/>
</dbReference>
<dbReference type="GeneID" id="26470"/>
<dbReference type="KEGG" id="hsa:26470"/>
<dbReference type="UCSC" id="uc002dup.5">
    <molecule id="Q6UXD5-1"/>
    <property type="organism name" value="human"/>
</dbReference>
<dbReference type="AGR" id="HGNC:30844"/>
<dbReference type="CTD" id="26470"/>
<dbReference type="DisGeNET" id="26470"/>
<dbReference type="GeneCards" id="SEZ6L2"/>
<dbReference type="HGNC" id="HGNC:30844">
    <property type="gene designation" value="SEZ6L2"/>
</dbReference>
<dbReference type="HPA" id="ENSG00000174938">
    <property type="expression patterns" value="Tissue enhanced (brain, pituitary gland)"/>
</dbReference>
<dbReference type="MIM" id="616667">
    <property type="type" value="gene"/>
</dbReference>
<dbReference type="neXtProt" id="NX_Q6UXD5"/>
<dbReference type="OpenTargets" id="ENSG00000174938"/>
<dbReference type="PharmGKB" id="PA134924025"/>
<dbReference type="VEuPathDB" id="HostDB:ENSG00000174938"/>
<dbReference type="eggNOG" id="ENOG502QS53">
    <property type="taxonomic scope" value="Eukaryota"/>
</dbReference>
<dbReference type="GeneTree" id="ENSGT00940000160492"/>
<dbReference type="HOGENOM" id="CLU_011474_3_0_1"/>
<dbReference type="InParanoid" id="Q6UXD5"/>
<dbReference type="OrthoDB" id="9935125at2759"/>
<dbReference type="PAN-GO" id="Q6UXD5">
    <property type="GO annotations" value="4 GO annotations based on evolutionary models"/>
</dbReference>
<dbReference type="PhylomeDB" id="Q6UXD5"/>
<dbReference type="TreeFam" id="TF330037"/>
<dbReference type="PathwayCommons" id="Q6UXD5"/>
<dbReference type="SignaLink" id="Q6UXD5"/>
<dbReference type="BioGRID-ORCS" id="26470">
    <property type="hits" value="15 hits in 1156 CRISPR screens"/>
</dbReference>
<dbReference type="ChiTaRS" id="SEZ6L2">
    <property type="organism name" value="human"/>
</dbReference>
<dbReference type="GenomeRNAi" id="26470"/>
<dbReference type="Pharos" id="Q6UXD5">
    <property type="development level" value="Tbio"/>
</dbReference>
<dbReference type="PRO" id="PR:Q6UXD5"/>
<dbReference type="Proteomes" id="UP000005640">
    <property type="component" value="Chromosome 16"/>
</dbReference>
<dbReference type="RNAct" id="Q6UXD5">
    <property type="molecule type" value="protein"/>
</dbReference>
<dbReference type="Bgee" id="ENSG00000174938">
    <property type="expression patterns" value="Expressed in right hemisphere of cerebellum and 166 other cell types or tissues"/>
</dbReference>
<dbReference type="ExpressionAtlas" id="Q6UXD5">
    <property type="expression patterns" value="baseline and differential"/>
</dbReference>
<dbReference type="GO" id="GO:0005783">
    <property type="term" value="C:endoplasmic reticulum"/>
    <property type="evidence" value="ECO:0000318"/>
    <property type="project" value="GO_Central"/>
</dbReference>
<dbReference type="GO" id="GO:0005789">
    <property type="term" value="C:endoplasmic reticulum membrane"/>
    <property type="evidence" value="ECO:0007669"/>
    <property type="project" value="UniProtKB-SubCell"/>
</dbReference>
<dbReference type="GO" id="GO:0043025">
    <property type="term" value="C:neuronal cell body"/>
    <property type="evidence" value="ECO:0000318"/>
    <property type="project" value="GO_Central"/>
</dbReference>
<dbReference type="GO" id="GO:0005886">
    <property type="term" value="C:plasma membrane"/>
    <property type="evidence" value="ECO:0007669"/>
    <property type="project" value="UniProtKB-SubCell"/>
</dbReference>
<dbReference type="GO" id="GO:0060074">
    <property type="term" value="P:synapse maturation"/>
    <property type="evidence" value="ECO:0000318"/>
    <property type="project" value="GO_Central"/>
</dbReference>
<dbReference type="CDD" id="cd00033">
    <property type="entry name" value="CCP"/>
    <property type="match status" value="5"/>
</dbReference>
<dbReference type="CDD" id="cd00041">
    <property type="entry name" value="CUB"/>
    <property type="match status" value="3"/>
</dbReference>
<dbReference type="FunFam" id="2.60.120.290:FF:000029">
    <property type="entry name" value="seizure 6-like protein 2 isoform X1"/>
    <property type="match status" value="1"/>
</dbReference>
<dbReference type="FunFam" id="2.10.70.10:FF:000025">
    <property type="entry name" value="seizure 6-like protein 2 isoform X2"/>
    <property type="match status" value="1"/>
</dbReference>
<dbReference type="FunFam" id="2.10.70.10:FF:000039">
    <property type="entry name" value="seizure 6-like protein 2 isoform X2"/>
    <property type="match status" value="1"/>
</dbReference>
<dbReference type="FunFam" id="2.60.120.290:FF:000022">
    <property type="entry name" value="seizure 6-like protein 2 isoform X2"/>
    <property type="match status" value="1"/>
</dbReference>
<dbReference type="FunFam" id="2.60.120.290:FF:000015">
    <property type="entry name" value="Seizure protein 6 homolog isoform 2"/>
    <property type="match status" value="1"/>
</dbReference>
<dbReference type="FunFam" id="2.10.70.10:FF:000009">
    <property type="entry name" value="Seizure related 6 homolog like"/>
    <property type="match status" value="1"/>
</dbReference>
<dbReference type="FunFam" id="2.10.70.10:FF:000010">
    <property type="entry name" value="Seizure related 6 homolog like"/>
    <property type="match status" value="1"/>
</dbReference>
<dbReference type="FunFam" id="2.10.70.10:FF:000012">
    <property type="entry name" value="Seizure related 6 homolog like"/>
    <property type="match status" value="1"/>
</dbReference>
<dbReference type="Gene3D" id="2.10.70.10">
    <property type="entry name" value="Complement Module, domain 1"/>
    <property type="match status" value="5"/>
</dbReference>
<dbReference type="Gene3D" id="2.60.120.290">
    <property type="entry name" value="Spermadhesin, CUB domain"/>
    <property type="match status" value="3"/>
</dbReference>
<dbReference type="InterPro" id="IPR000859">
    <property type="entry name" value="CUB_dom"/>
</dbReference>
<dbReference type="InterPro" id="IPR051277">
    <property type="entry name" value="SEZ6_CSMD_C4BPB_Regulators"/>
</dbReference>
<dbReference type="InterPro" id="IPR035914">
    <property type="entry name" value="Sperma_CUB_dom_sf"/>
</dbReference>
<dbReference type="InterPro" id="IPR035976">
    <property type="entry name" value="Sushi/SCR/CCP_sf"/>
</dbReference>
<dbReference type="InterPro" id="IPR000436">
    <property type="entry name" value="Sushi_SCR_CCP_dom"/>
</dbReference>
<dbReference type="PANTHER" id="PTHR45656">
    <property type="entry name" value="PROTEIN CBR-CLEC-78"/>
    <property type="match status" value="1"/>
</dbReference>
<dbReference type="PANTHER" id="PTHR45656:SF4">
    <property type="entry name" value="PROTEIN CBR-CLEC-78"/>
    <property type="match status" value="1"/>
</dbReference>
<dbReference type="Pfam" id="PF00431">
    <property type="entry name" value="CUB"/>
    <property type="match status" value="1"/>
</dbReference>
<dbReference type="Pfam" id="PF00084">
    <property type="entry name" value="Sushi"/>
    <property type="match status" value="5"/>
</dbReference>
<dbReference type="SMART" id="SM00032">
    <property type="entry name" value="CCP"/>
    <property type="match status" value="5"/>
</dbReference>
<dbReference type="SMART" id="SM00042">
    <property type="entry name" value="CUB"/>
    <property type="match status" value="3"/>
</dbReference>
<dbReference type="SUPFAM" id="SSF57535">
    <property type="entry name" value="Complement control module/SCR domain"/>
    <property type="match status" value="5"/>
</dbReference>
<dbReference type="SUPFAM" id="SSF49854">
    <property type="entry name" value="Spermadhesin, CUB domain"/>
    <property type="match status" value="3"/>
</dbReference>
<dbReference type="PROSITE" id="PS01180">
    <property type="entry name" value="CUB"/>
    <property type="match status" value="3"/>
</dbReference>
<dbReference type="PROSITE" id="PS50923">
    <property type="entry name" value="SUSHI"/>
    <property type="match status" value="5"/>
</dbReference>
<gene>
    <name type="primary">SEZ6L2</name>
    <name type="synonym">PSK</name>
    <name type="ORF">UNQ1903/PRO4349</name>
</gene>
<name>SE6L2_HUMAN</name>
<comment type="function">
    <text evidence="1">May contribute to specialized endoplasmic reticulum functions in neurons.</text>
</comment>
<comment type="subcellular location">
    <subcellularLocation>
        <location evidence="9">Cell membrane</location>
        <topology evidence="9">Single-pass type I membrane protein</topology>
    </subcellularLocation>
    <subcellularLocation>
        <location evidence="1">Endoplasmic reticulum membrane</location>
        <topology evidence="1">Single-pass type I membrane protein</topology>
    </subcellularLocation>
    <text>Detected on cell surface of lung-cancer.</text>
</comment>
<comment type="alternative products">
    <event type="alternative splicing"/>
    <isoform>
        <id>Q6UXD5-1</id>
        <name>1</name>
        <sequence type="displayed"/>
    </isoform>
    <isoform>
        <id>Q6UXD5-2</id>
        <name>2</name>
        <name>psk-3</name>
        <sequence type="described" ref="VSP_033595"/>
    </isoform>
    <isoform>
        <id>Q6UXD5-3</id>
        <name>3</name>
        <name>psk-1</name>
        <sequence type="described" ref="VSP_033595 VSP_033596"/>
    </isoform>
    <isoform>
        <id>Q6UXD5-4</id>
        <name>4</name>
        <name>psk-2</name>
        <sequence type="described" ref="VSP_033595 VSP_033597"/>
    </isoform>
    <isoform>
        <id>Q6UXD5-5</id>
        <name>5</name>
        <sequence type="described" ref="VSP_044739 VSP_033596"/>
    </isoform>
    <isoform>
        <id>Q6UXD5-6</id>
        <name>6</name>
        <sequence type="described" ref="VSP_045702 VSP_045703"/>
    </isoform>
</comment>
<comment type="induction">
    <text evidence="9">Increased expression in the majority of primary lung cancers and lung-cell lines tested.</text>
</comment>
<comment type="PTM">
    <text evidence="10">O-glycosylated with core 1 or possibly core 8 glycans.</text>
</comment>
<comment type="miscellaneous">
    <text>May serve as a prognostic marker for lung cancers.</text>
</comment>
<comment type="similarity">
    <text evidence="14">Belongs to the SEZ6 family.</text>
</comment>
<protein>
    <recommendedName>
        <fullName>Seizure 6-like protein 2</fullName>
    </recommendedName>
</protein>
<sequence>MGTPRAQHPPPPQLLFLILLSCPWIQGLPLKEEEILPEPGSETPTVASEALAELLHGALLRRGPEMGYLPGSDRDPTLATPPAGQTLAVPSLPRATEPGTGPLTTAVTPNGVRGAGPTAPELLTPPPGTTAPPPPSPASPGPPLGPEGGEEETTTTIITTTTVTTTVTSPVLCNNNISEGEGYVESPDLGSPVSRTLGLLDCTYSIHVYPGYGIEIQVQTLNLSQEEELLVLAGGGSPGLAPRLLANSSMLGEGQVLRSPTNRLLLHFQSPRVPRGGGFRIHYQAYLLSCGFPPRPAHGDVSVTDLHPGGTATFHCDSGYQLQGEETLICLNGTRPSWNGETPSCMASCGGTIHNATLGRIVSPEPGGAVGPNLTCRWVIEAAEGRRLHLHFERVSLDEDNDRLMVRSGGSPLSPVIYDSDMDDVPERGLISDAQSLYVELLSETPANPLLLSLRFEAFEEDRCFAPFLAHGNVTTTDPEYRPGALATFSCLPGYALEPPGPPNAIECVDPTEPHWNDTEPACKAMCGGELSEPAGVVLSPDWPQSYSPGQDCVWGVHVQEEKRILLQVEILNVREGDMLTLFDGDGPSARVLAQLRGPQPRRRLLSSGPDLTLQFQAPPGPPNPGLGQGFVLHFKEVPRNDTCPELPPPEWGWRTASHGDLIRGTVLTYQCEPGYELLGSDILTCQWDLSWSAAPPACQKIMTCADPGEIANGHRTASDAGFPVGSHVQYRCLPGYSLEGAAMLTCYSRDTGTPKWSDRVPKCALKYEPCLNPGVPENGYQTLYKHHYQAGESLRFFCYEGFELIGEVTITCVPGHPSQWTSQPPLCKVTQTTDPSRQLEGGNLALAILLPLGLVIVLGSGVYIYYTKLQGKSLFGFSGSHSYSPITVESDFSNPLYEAGDTREYEVSI</sequence>
<proteinExistence type="evidence at protein level"/>
<accession>Q6UXD5</accession>
<accession>B7Z1N0</accession>
<accession>F5H293</accession>
<accession>H7BXQ6</accession>
<accession>Q9BW82</accession>
<accession>Q9UJ45</accession>
<accession>Q9UJ46</accession>
<accession>Q9UJ47</accession>
<evidence type="ECO:0000250" key="1"/>
<evidence type="ECO:0000255" key="2"/>
<evidence type="ECO:0000255" key="3">
    <source>
        <dbReference type="PROSITE-ProRule" id="PRU00059"/>
    </source>
</evidence>
<evidence type="ECO:0000255" key="4">
    <source>
        <dbReference type="PROSITE-ProRule" id="PRU00302"/>
    </source>
</evidence>
<evidence type="ECO:0000256" key="5">
    <source>
        <dbReference type="SAM" id="MobiDB-lite"/>
    </source>
</evidence>
<evidence type="ECO:0000269" key="6">
    <source>
    </source>
</evidence>
<evidence type="ECO:0000269" key="7">
    <source>
    </source>
</evidence>
<evidence type="ECO:0000269" key="8">
    <source>
    </source>
</evidence>
<evidence type="ECO:0000269" key="9">
    <source>
    </source>
</evidence>
<evidence type="ECO:0000269" key="10">
    <source>
    </source>
</evidence>
<evidence type="ECO:0000303" key="11">
    <source>
    </source>
</evidence>
<evidence type="ECO:0000303" key="12">
    <source>
    </source>
</evidence>
<evidence type="ECO:0000303" key="13">
    <source ref="1"/>
</evidence>
<evidence type="ECO:0000305" key="14"/>